<dbReference type="EMBL" id="X90580">
    <property type="protein sequence ID" value="CAA62208.1"/>
    <property type="molecule type" value="Genomic_DNA"/>
</dbReference>
<dbReference type="EMBL" id="U47107">
    <property type="protein sequence ID" value="AAA88904.1"/>
    <property type="molecule type" value="Genomic_DNA"/>
</dbReference>
<dbReference type="EMBL" id="X80835">
    <property type="protein sequence ID" value="CAA56794.1"/>
    <property type="molecule type" value="Genomic_DNA"/>
</dbReference>
<dbReference type="EMBL" id="BK006946">
    <property type="protein sequence ID" value="DAA09795.1"/>
    <property type="molecule type" value="Genomic_DNA"/>
</dbReference>
<dbReference type="PIR" id="S47446">
    <property type="entry name" value="S47446"/>
</dbReference>
<dbReference type="RefSeq" id="NP_013604.1">
    <property type="nucleotide sequence ID" value="NM_001182465.1"/>
</dbReference>
<dbReference type="PDB" id="7N84">
    <property type="method" value="EM"/>
    <property type="resolution" value="11.60 A"/>
    <property type="chains" value="X=1-1655"/>
</dbReference>
<dbReference type="PDB" id="7N85">
    <property type="method" value="EM"/>
    <property type="resolution" value="7.60 A"/>
    <property type="chains" value="N/P=1-1655"/>
</dbReference>
<dbReference type="PDB" id="7N9F">
    <property type="method" value="EM"/>
    <property type="resolution" value="37.00 A"/>
    <property type="chains" value="N/P=1-1655"/>
</dbReference>
<dbReference type="PDB" id="7WO9">
    <property type="method" value="EM"/>
    <property type="resolution" value="2.81 A"/>
    <property type="chains" value="A=1-1655"/>
</dbReference>
<dbReference type="PDB" id="7WOO">
    <property type="method" value="EM"/>
    <property type="resolution" value="3.71 A"/>
    <property type="chains" value="E=1-1655"/>
</dbReference>
<dbReference type="PDB" id="7WOT">
    <property type="method" value="EM"/>
    <property type="resolution" value="3.73 A"/>
    <property type="chains" value="E/Q=1-1655"/>
</dbReference>
<dbReference type="PDB" id="8TJ5">
    <property type="method" value="EM"/>
    <property type="resolution" value="6.60 A"/>
    <property type="chains" value="N/P=1-1655"/>
</dbReference>
<dbReference type="PDBsum" id="7N84"/>
<dbReference type="PDBsum" id="7N85"/>
<dbReference type="PDBsum" id="7N9F"/>
<dbReference type="PDBsum" id="7WO9"/>
<dbReference type="PDBsum" id="7WOO"/>
<dbReference type="PDBsum" id="7WOT"/>
<dbReference type="PDBsum" id="8TJ5"/>
<dbReference type="EMDB" id="EMD-24231"/>
<dbReference type="EMDB" id="EMD-24232"/>
<dbReference type="EMDB" id="EMD-24258"/>
<dbReference type="EMDB" id="EMD-32643"/>
<dbReference type="EMDB" id="EMD-32653"/>
<dbReference type="EMDB" id="EMD-32658"/>
<dbReference type="EMDB" id="EMD-41300"/>
<dbReference type="SMR" id="P52593"/>
<dbReference type="BioGRID" id="35040">
    <property type="interactions" value="607"/>
</dbReference>
<dbReference type="ComplexPortal" id="CPX-824">
    <property type="entry name" value="Nuclear pore complex"/>
</dbReference>
<dbReference type="DIP" id="DIP-2429N"/>
<dbReference type="FunCoup" id="P52593">
    <property type="interactions" value="225"/>
</dbReference>
<dbReference type="IntAct" id="P52593">
    <property type="interactions" value="34"/>
</dbReference>
<dbReference type="MINT" id="P52593"/>
<dbReference type="STRING" id="4932.YML103C"/>
<dbReference type="TCDB" id="1.I.1.1.1">
    <property type="family name" value="the nuclear pore complex (npc) family"/>
</dbReference>
<dbReference type="GlyGen" id="P52593">
    <property type="glycosylation" value="1 site"/>
</dbReference>
<dbReference type="iPTMnet" id="P52593"/>
<dbReference type="PaxDb" id="4932-YML103C"/>
<dbReference type="PeptideAtlas" id="P52593"/>
<dbReference type="DNASU" id="854868"/>
<dbReference type="EnsemblFungi" id="YML103C_mRNA">
    <property type="protein sequence ID" value="YML103C"/>
    <property type="gene ID" value="YML103C"/>
</dbReference>
<dbReference type="GeneID" id="854868"/>
<dbReference type="KEGG" id="sce:YML103C"/>
<dbReference type="AGR" id="SGD:S000004571"/>
<dbReference type="SGD" id="S000004571">
    <property type="gene designation" value="NUP188"/>
</dbReference>
<dbReference type="VEuPathDB" id="FungiDB:YML103C"/>
<dbReference type="eggNOG" id="ENOG502QQFV">
    <property type="taxonomic scope" value="Eukaryota"/>
</dbReference>
<dbReference type="HOGENOM" id="CLU_001029_1_0_1"/>
<dbReference type="InParanoid" id="P52593"/>
<dbReference type="OMA" id="HSWKFFA"/>
<dbReference type="OrthoDB" id="102511at2759"/>
<dbReference type="BioCyc" id="YEAST:G3O-32687-MONOMER"/>
<dbReference type="Reactome" id="R-SCE-159236">
    <property type="pathway name" value="Transport of Mature mRNA derived from an Intron-Containing Transcript"/>
</dbReference>
<dbReference type="Reactome" id="R-SCE-3371453">
    <property type="pathway name" value="Regulation of HSF1-mediated heat shock response"/>
</dbReference>
<dbReference type="Reactome" id="R-SCE-4085377">
    <property type="pathway name" value="SUMOylation of SUMOylation proteins"/>
</dbReference>
<dbReference type="Reactome" id="R-SCE-4551638">
    <property type="pathway name" value="SUMOylation of chromatin organization proteins"/>
</dbReference>
<dbReference type="Reactome" id="R-SCE-4570464">
    <property type="pathway name" value="SUMOylation of RNA binding proteins"/>
</dbReference>
<dbReference type="BioGRID-ORCS" id="854868">
    <property type="hits" value="0 hits in 10 CRISPR screens"/>
</dbReference>
<dbReference type="PRO" id="PR:P52593"/>
<dbReference type="Proteomes" id="UP000002311">
    <property type="component" value="Chromosome XIII"/>
</dbReference>
<dbReference type="RNAct" id="P52593">
    <property type="molecule type" value="protein"/>
</dbReference>
<dbReference type="GO" id="GO:0005635">
    <property type="term" value="C:nuclear envelope"/>
    <property type="evidence" value="ECO:0000303"/>
    <property type="project" value="ComplexPortal"/>
</dbReference>
<dbReference type="GO" id="GO:0031965">
    <property type="term" value="C:nuclear membrane"/>
    <property type="evidence" value="ECO:0007669"/>
    <property type="project" value="UniProtKB-SubCell"/>
</dbReference>
<dbReference type="GO" id="GO:0005643">
    <property type="term" value="C:nuclear pore"/>
    <property type="evidence" value="ECO:0000314"/>
    <property type="project" value="SGD"/>
</dbReference>
<dbReference type="GO" id="GO:0044611">
    <property type="term" value="C:nuclear pore inner ring"/>
    <property type="evidence" value="ECO:0000314"/>
    <property type="project" value="SGD"/>
</dbReference>
<dbReference type="GO" id="GO:0017056">
    <property type="term" value="F:structural constituent of nuclear pore"/>
    <property type="evidence" value="ECO:0000316"/>
    <property type="project" value="SGD"/>
</dbReference>
<dbReference type="GO" id="GO:0031990">
    <property type="term" value="P:mRNA export from nucleus in response to heat stress"/>
    <property type="evidence" value="ECO:0000315"/>
    <property type="project" value="SGD"/>
</dbReference>
<dbReference type="GO" id="GO:0006999">
    <property type="term" value="P:nuclear pore organization"/>
    <property type="evidence" value="ECO:0000315"/>
    <property type="project" value="SGD"/>
</dbReference>
<dbReference type="GO" id="GO:0006913">
    <property type="term" value="P:nucleocytoplasmic transport"/>
    <property type="evidence" value="ECO:0000303"/>
    <property type="project" value="ComplexPortal"/>
</dbReference>
<dbReference type="GO" id="GO:0006606">
    <property type="term" value="P:protein import into nucleus"/>
    <property type="evidence" value="ECO:0000316"/>
    <property type="project" value="SGD"/>
</dbReference>
<dbReference type="GO" id="GO:0006405">
    <property type="term" value="P:RNA export from nucleus"/>
    <property type="evidence" value="ECO:0000318"/>
    <property type="project" value="GO_Central"/>
</dbReference>
<dbReference type="FunFam" id="1.25.10.70:FF:000001">
    <property type="entry name" value="Nucleoporin NUP188"/>
    <property type="match status" value="1"/>
</dbReference>
<dbReference type="Gene3D" id="1.25.10.70">
    <property type="match status" value="1"/>
</dbReference>
<dbReference type="InterPro" id="IPR018864">
    <property type="entry name" value="Nucleoporin_Nup188_N"/>
</dbReference>
<dbReference type="InterPro" id="IPR044840">
    <property type="entry name" value="Nup188"/>
</dbReference>
<dbReference type="InterPro" id="IPR041634">
    <property type="entry name" value="Nup188_C"/>
</dbReference>
<dbReference type="InterPro" id="IPR048883">
    <property type="entry name" value="Nup188_N-subdom_III"/>
</dbReference>
<dbReference type="PANTHER" id="PTHR31431:SF1">
    <property type="entry name" value="NUCLEOPORIN NUP188"/>
    <property type="match status" value="1"/>
</dbReference>
<dbReference type="PANTHER" id="PTHR31431">
    <property type="entry name" value="NUCLEOPORIN NUP188 HOMOLOG"/>
    <property type="match status" value="1"/>
</dbReference>
<dbReference type="Pfam" id="PF18378">
    <property type="entry name" value="Nup188_C"/>
    <property type="match status" value="1"/>
</dbReference>
<dbReference type="Pfam" id="PF10487">
    <property type="entry name" value="Nup188_N"/>
    <property type="match status" value="1"/>
</dbReference>
<dbReference type="Pfam" id="PF21093">
    <property type="entry name" value="Nup188_N-subdom_III"/>
    <property type="match status" value="1"/>
</dbReference>
<name>NU188_YEAST</name>
<reference key="1">
    <citation type="journal article" date="1996" name="J. Cell Biol.">
        <title>Nic96p is required for nuclear pore formation and functionally interacts with a novel nucleoporin, Nup188p.</title>
        <authorList>
            <person name="Zabel U."/>
            <person name="Doye V."/>
            <person name="Tekotte H."/>
            <person name="Wepf R."/>
            <person name="Grandi P."/>
            <person name="Hurt E.C."/>
        </authorList>
    </citation>
    <scope>NUCLEOTIDE SEQUENCE [GENOMIC DNA]</scope>
    <scope>INTERACTION WITH NIC96</scope>
</reference>
<reference key="2">
    <citation type="journal article" date="1996" name="J. Cell Biol.">
        <title>The yeast nucleoporin Nup188p interacts genetically and physically with the core structures of the nuclear pore complex.</title>
        <authorList>
            <person name="Nehrbass U."/>
            <person name="Rout M.P."/>
            <person name="Maguire S."/>
            <person name="Blobel G."/>
            <person name="Wozniak R.W."/>
        </authorList>
    </citation>
    <scope>NUCLEOTIDE SEQUENCE [GENOMIC DNA]</scope>
    <scope>INTERACTION WITH NIC96 AND POM152</scope>
</reference>
<reference key="3">
    <citation type="journal article" date="1997" name="Nature">
        <title>The nucleotide sequence of Saccharomyces cerevisiae chromosome XIII.</title>
        <authorList>
            <person name="Bowman S."/>
            <person name="Churcher C.M."/>
            <person name="Badcock K."/>
            <person name="Brown D."/>
            <person name="Chillingworth T."/>
            <person name="Connor R."/>
            <person name="Dedman K."/>
            <person name="Devlin K."/>
            <person name="Gentles S."/>
            <person name="Hamlin N."/>
            <person name="Hunt S."/>
            <person name="Jagels K."/>
            <person name="Lye G."/>
            <person name="Moule S."/>
            <person name="Odell C."/>
            <person name="Pearson D."/>
            <person name="Rajandream M.A."/>
            <person name="Rice P."/>
            <person name="Skelton J."/>
            <person name="Walsh S.V."/>
            <person name="Whitehead S."/>
            <person name="Barrell B.G."/>
        </authorList>
    </citation>
    <scope>NUCLEOTIDE SEQUENCE [LARGE SCALE GENOMIC DNA]</scope>
    <source>
        <strain>ATCC 204508 / S288c</strain>
    </source>
</reference>
<reference key="4">
    <citation type="journal article" date="2014" name="G3 (Bethesda)">
        <title>The reference genome sequence of Saccharomyces cerevisiae: Then and now.</title>
        <authorList>
            <person name="Engel S.R."/>
            <person name="Dietrich F.S."/>
            <person name="Fisk D.G."/>
            <person name="Binkley G."/>
            <person name="Balakrishnan R."/>
            <person name="Costanzo M.C."/>
            <person name="Dwight S.S."/>
            <person name="Hitz B.C."/>
            <person name="Karra K."/>
            <person name="Nash R.S."/>
            <person name="Weng S."/>
            <person name="Wong E.D."/>
            <person name="Lloyd P."/>
            <person name="Skrzypek M.S."/>
            <person name="Miyasato S.R."/>
            <person name="Simison M."/>
            <person name="Cherry J.M."/>
        </authorList>
    </citation>
    <scope>GENOME REANNOTATION</scope>
    <source>
        <strain>ATCC 204508 / S288c</strain>
    </source>
</reference>
<reference key="5">
    <citation type="journal article" date="1995" name="J. Cell Biol.">
        <title>Two novel related yeast nucleoporins Nup170p and Nup157p: complementation with the vertebrate homologue Nup155p and functional interactions with the yeast nuclear pore-membrane protein Pom152p.</title>
        <authorList>
            <person name="Aitchison J.D."/>
            <person name="Rout M.P."/>
            <person name="Marelli M."/>
            <person name="Blobel G."/>
            <person name="Wozniak R.W."/>
        </authorList>
    </citation>
    <scope>PROTEIN SEQUENCE OF 1187-1205 AND 1611-1629</scope>
</reference>
<reference key="6">
    <citation type="journal article" date="2000" name="J. Cell Biol.">
        <title>The yeast nuclear pore complex: composition, architecture, and transport mechanism.</title>
        <authorList>
            <person name="Rout M.P."/>
            <person name="Aitchison J.D."/>
            <person name="Suprapto A."/>
            <person name="Hjertaas K."/>
            <person name="Zhao Y."/>
            <person name="Chait B.T."/>
        </authorList>
    </citation>
    <scope>FUNCTION</scope>
    <scope>IDENTIFICATION IN THE NUCLEAR PORE COMPLEX</scope>
    <scope>SUBCELLULAR LOCATION</scope>
</reference>
<reference key="7">
    <citation type="journal article" date="2003" name="Dev. Cell">
        <title>Peering through the pore: nuclear pore complex structure, assembly, and function.</title>
        <authorList>
            <person name="Suntharalingam M."/>
            <person name="Wente S.R."/>
        </authorList>
    </citation>
    <scope>REVIEW</scope>
</reference>
<reference key="8">
    <citation type="journal article" date="2003" name="Nature">
        <title>Global analysis of protein expression in yeast.</title>
        <authorList>
            <person name="Ghaemmaghami S."/>
            <person name="Huh W.-K."/>
            <person name="Bower K."/>
            <person name="Howson R.W."/>
            <person name="Belle A."/>
            <person name="Dephoure N."/>
            <person name="O'Shea E.K."/>
            <person name="Weissman J.S."/>
        </authorList>
    </citation>
    <scope>LEVEL OF PROTEIN EXPRESSION [LARGE SCALE ANALYSIS]</scope>
</reference>
<reference key="9">
    <citation type="journal article" date="2008" name="Mol. Cell. Proteomics">
        <title>A multidimensional chromatography technology for in-depth phosphoproteome analysis.</title>
        <authorList>
            <person name="Albuquerque C.P."/>
            <person name="Smolka M.B."/>
            <person name="Payne S.H."/>
            <person name="Bafna V."/>
            <person name="Eng J."/>
            <person name="Zhou H."/>
        </authorList>
    </citation>
    <scope>PHOSPHORYLATION [LARGE SCALE ANALYSIS] AT SER-340</scope>
    <scope>IDENTIFICATION BY MASS SPECTROMETRY [LARGE SCALE ANALYSIS]</scope>
</reference>
<reference key="10">
    <citation type="journal article" date="2012" name="Proteomics">
        <title>Sites of ubiquitin attachment in Saccharomyces cerevisiae.</title>
        <authorList>
            <person name="Starita L.M."/>
            <person name="Lo R.S."/>
            <person name="Eng J.K."/>
            <person name="von Haller P.D."/>
            <person name="Fields S."/>
        </authorList>
    </citation>
    <scope>UBIQUITINATION [LARGE SCALE ANALYSIS] AT LYS-406</scope>
    <scope>IDENTIFICATION BY MASS SPECTROMETRY [LARGE SCALE ANALYSIS]</scope>
</reference>
<gene>
    <name type="primary">NUP188</name>
    <name type="ordered locus">YML103C</name>
</gene>
<organism>
    <name type="scientific">Saccharomyces cerevisiae (strain ATCC 204508 / S288c)</name>
    <name type="common">Baker's yeast</name>
    <dbReference type="NCBI Taxonomy" id="559292"/>
    <lineage>
        <taxon>Eukaryota</taxon>
        <taxon>Fungi</taxon>
        <taxon>Dikarya</taxon>
        <taxon>Ascomycota</taxon>
        <taxon>Saccharomycotina</taxon>
        <taxon>Saccharomycetes</taxon>
        <taxon>Saccharomycetales</taxon>
        <taxon>Saccharomycetaceae</taxon>
        <taxon>Saccharomyces</taxon>
    </lineage>
</organism>
<comment type="function">
    <text evidence="2">Functions as a component of the nuclear pore complex (NPC). NPC components, collectively referred to as nucleoporins (NUPs), can play the role of both NPC structural components and of docking or interaction partners for transiently associated nuclear transport factors. NUP188 probably plays an important role in NPC assembly and organization.</text>
</comment>
<comment type="subunit">
    <text evidence="2 4 5">Component of the nuclear pore complex (NPC). NPC constitutes the exclusive means of nucleocytoplasmic transport. NPCs allow the passive diffusion of ions and small molecules and the active, nuclear transport receptor-mediated bidirectional transport of macromolecules such as proteins, RNAs, ribonucleoparticles (RNPs), and ribosomal subunits across the nuclear envelope. Due to its 8-fold rotational symmetry, all subunits are present with 8 copies or multiples thereof. Interacts with POM152 and NIC96.</text>
</comment>
<comment type="subcellular location">
    <subcellularLocation>
        <location evidence="2">Nucleus</location>
        <location evidence="2">Nuclear pore complex</location>
    </subcellularLocation>
    <subcellularLocation>
        <location>Nucleus membrane</location>
        <topology>Peripheral membrane protein</topology>
        <orientation>Cytoplasmic side</orientation>
    </subcellularLocation>
    <subcellularLocation>
        <location>Nucleus membrane</location>
        <topology>Peripheral membrane protein</topology>
        <orientation>Nucleoplasmic side</orientation>
    </subcellularLocation>
    <text>Symmetric distribution.</text>
</comment>
<comment type="miscellaneous">
    <text evidence="3">Present with 11700 molecules/cell in log phase SD medium.</text>
</comment>
<comment type="similarity">
    <text evidence="6">Belongs to the Nup188 family.</text>
</comment>
<sequence>MATPSFGNSSPQLTFTHVANFMNDAAADVSAVDAKQLAQIRQFLKANKTNLIESLNTIRQNVTSSGDHNKLRSTIANLLQINVDNDPFFAQSEDLSHAVEFFMSERSSRLHIVYSLLVNPDIDLETYSFIDNDRFNVVGKLISIISSVIQNYDIITASSLAHDYNNDQDMFTIVSLVQLKKFSDLKFILQILQILNLMILNTKVPVDIVNQWFLQYQNQFVEFCRNINSTDKSIDTSSLQLYKFQNFQDLSYLSETLISRISSLFTITTILILGLNTSIAQFDIQSPLYMDTETFDTVNSALENDVATNIVNEDPIFHPMIHYSWSFILYYRRALQSSESFDDSDITKFALFAESHDVLQKLNTLSEILSFDPVYTTVITVFLEFSLNFIPITASTSRVFAKIISKAPEQFIENFLTNDTFEKKLSIIKAKLPLLNESLIPLINLALIDTEFANFELKDICSFAVTKSSLNDLDYDLIADTITNSSSSSDIIVPDLIELKSDLLVAPPLENENSNCLLSIPKSTKGKILTIKQQQQQQQQQNGQQPPTTSNLIIFLYKFNGWSLVGRILQNLLHSYMEKGTQLDDLQHELMISIIKLVTNVVDPKTSIEKSSEILSYLSNSLDTSASTINGASIIQVIFEIFEISLQRKDYTSIVQCCEFMTMLTPNYLHLVSSYLNKSDLLDKYGKTGLSNMILGSVELSTGDYTFTIQLLKLTKVFIRESLSLKNIHISKRSKIDIINKLILHAIHIFESYYNWKYNNFLQKFEIAFHLTLIFYDVLHDVFTINPHQKDQLIISSSANKLLQLFLTPMDSIDLAPNTLTNILISPLNTTTKILGDKILGNLYSKVMNNSFKLCTLLIAIRGSNRDLKPSNLEKLLFINSSKLVDVYTLPSYVHFKVQIIELLSYLVEAPWNDDYPFLLSFLGEAKSMAFLKEVLSDLSSPVQDWNLLRSLYIFFTTLLESKQDGLSILFLTGQFASNKKINDESSIDKKSSILTVLQKNSLLLDSTPEEVSCKLLETITYVLNTWTNSKIFIKDPKFVNSLLAKLKDSKKLFQKKENLTRDETVSLIKKYKLISRIVEIFALCIYNSTDSNSEILNFLNQEDLFELVHHFFQIDGFNKTFHDELNLKFKEKWPSLELQSFQKIPLSRINENENFGYDIPLLDIVLKADRSWNEPSKSQTNFKEEITDASLNLQYVNYEISTAKAWGALITTFVKRSTVPLNDGFVDLVEHFLKLNIDFGSDKQMFTQIYLERIELSFYILYSFKLSGKLLKEEKIIELMNKIFTIFKSGEIDFIKNIGKSLKNNFYRPLLRSVLVLLELVSSGDRFIELISDQLLEFFELVFSKGVYLILSEILCQINKCSTRGLSTDHTTQIVNLEDNTQDLLLLLSLFKKITNVNPSKNFNVILASSLNEVGTLKVILNLYSSAHLIRINDEPILGQITLTFISELCSIEPIAAKLINSGLYSVLLESPLSVAIQQGDIKPEFSPRLHNIWSNGLLSIVLLLLSQFGIKVLPETCLFVSYFGKQIKSTIYNWGDNKLAVSSSLIKETNQLVLLQKMLNLLNYQELFIQPKNSDDQQEAVELVIGLDSEHDKKRLSAALSKFLTHPKYLNSRIIPTTLEEQQQLEDESSRLEFVKGISRDIKALQDSLFKDV</sequence>
<evidence type="ECO:0000255" key="1"/>
<evidence type="ECO:0000269" key="2">
    <source>
    </source>
</evidence>
<evidence type="ECO:0000269" key="3">
    <source>
    </source>
</evidence>
<evidence type="ECO:0000269" key="4">
    <source>
    </source>
</evidence>
<evidence type="ECO:0000269" key="5">
    <source>
    </source>
</evidence>
<evidence type="ECO:0000305" key="6"/>
<evidence type="ECO:0007744" key="7">
    <source>
    </source>
</evidence>
<evidence type="ECO:0007744" key="8">
    <source>
    </source>
</evidence>
<evidence type="ECO:0007829" key="9">
    <source>
        <dbReference type="PDB" id="7WO9"/>
    </source>
</evidence>
<proteinExistence type="evidence at protein level"/>
<accession>P52593</accession>
<accession>D6W0I1</accession>
<protein>
    <recommendedName>
        <fullName>Nucleoporin NUP188</fullName>
    </recommendedName>
    <alternativeName>
        <fullName>Nuclear pore protein NUP188</fullName>
    </alternativeName>
</protein>
<keyword id="KW-0002">3D-structure</keyword>
<keyword id="KW-0175">Coiled coil</keyword>
<keyword id="KW-0903">Direct protein sequencing</keyword>
<keyword id="KW-1017">Isopeptide bond</keyword>
<keyword id="KW-0472">Membrane</keyword>
<keyword id="KW-0509">mRNA transport</keyword>
<keyword id="KW-0906">Nuclear pore complex</keyword>
<keyword id="KW-0539">Nucleus</keyword>
<keyword id="KW-0597">Phosphoprotein</keyword>
<keyword id="KW-0653">Protein transport</keyword>
<keyword id="KW-1185">Reference proteome</keyword>
<keyword id="KW-0811">Translocation</keyword>
<keyword id="KW-0813">Transport</keyword>
<keyword id="KW-0832">Ubl conjugation</keyword>
<feature type="chain" id="PRO_0000204856" description="Nucleoporin NUP188">
    <location>
        <begin position="1"/>
        <end position="1655"/>
    </location>
</feature>
<feature type="region of interest" description="Leucine-zipper">
    <location>
        <begin position="250"/>
        <end position="271"/>
    </location>
</feature>
<feature type="coiled-coil region" evidence="1">
    <location>
        <begin position="35"/>
        <end position="62"/>
    </location>
</feature>
<feature type="modified residue" description="Phosphoserine" evidence="7">
    <location>
        <position position="340"/>
    </location>
</feature>
<feature type="cross-link" description="Glycyl lysine isopeptide (Lys-Gly) (interchain with G-Cter in ubiquitin)" evidence="8">
    <location>
        <position position="406"/>
    </location>
</feature>
<feature type="helix" evidence="9">
    <location>
        <begin position="15"/>
        <end position="24"/>
    </location>
</feature>
<feature type="helix" evidence="9">
    <location>
        <begin position="29"/>
        <end position="31"/>
    </location>
</feature>
<feature type="helix" evidence="9">
    <location>
        <begin position="34"/>
        <end position="46"/>
    </location>
</feature>
<feature type="turn" evidence="9">
    <location>
        <begin position="50"/>
        <end position="55"/>
    </location>
</feature>
<feature type="helix" evidence="9">
    <location>
        <begin position="70"/>
        <end position="79"/>
    </location>
</feature>
<feature type="turn" evidence="9">
    <location>
        <begin position="83"/>
        <end position="85"/>
    </location>
</feature>
<feature type="helix" evidence="9">
    <location>
        <begin position="87"/>
        <end position="91"/>
    </location>
</feature>
<feature type="helix" evidence="9">
    <location>
        <begin position="95"/>
        <end position="118"/>
    </location>
</feature>
<feature type="helix" evidence="9">
    <location>
        <begin position="120"/>
        <end position="122"/>
    </location>
</feature>
<feature type="helix" evidence="9">
    <location>
        <begin position="124"/>
        <end position="131"/>
    </location>
</feature>
<feature type="helix" evidence="9">
    <location>
        <begin position="134"/>
        <end position="150"/>
    </location>
</feature>
<feature type="turn" evidence="9">
    <location>
        <begin position="151"/>
        <end position="155"/>
    </location>
</feature>
<feature type="helix" evidence="9">
    <location>
        <begin position="156"/>
        <end position="161"/>
    </location>
</feature>
<feature type="helix" evidence="9">
    <location>
        <begin position="168"/>
        <end position="198"/>
    </location>
</feature>
<feature type="turn" evidence="9">
    <location>
        <begin position="199"/>
        <end position="201"/>
    </location>
</feature>
<feature type="helix" evidence="9">
    <location>
        <begin position="206"/>
        <end position="218"/>
    </location>
</feature>
<feature type="helix" evidence="9">
    <location>
        <begin position="220"/>
        <end position="228"/>
    </location>
</feature>
<feature type="helix" evidence="9">
    <location>
        <begin position="248"/>
        <end position="272"/>
    </location>
</feature>
<feature type="turn" evidence="9">
    <location>
        <begin position="277"/>
        <end position="280"/>
    </location>
</feature>
<feature type="helix" evidence="9">
    <location>
        <begin position="287"/>
        <end position="290"/>
    </location>
</feature>
<feature type="helix" evidence="9">
    <location>
        <begin position="294"/>
        <end position="307"/>
    </location>
</feature>
<feature type="strand" evidence="9">
    <location>
        <begin position="312"/>
        <end position="314"/>
    </location>
</feature>
<feature type="helix" evidence="9">
    <location>
        <begin position="319"/>
        <end position="335"/>
    </location>
</feature>
<feature type="turn" evidence="9">
    <location>
        <begin position="343"/>
        <end position="345"/>
    </location>
</feature>
<feature type="helix" evidence="9">
    <location>
        <begin position="346"/>
        <end position="355"/>
    </location>
</feature>
<feature type="helix" evidence="9">
    <location>
        <begin position="358"/>
        <end position="368"/>
    </location>
</feature>
<feature type="helix" evidence="9">
    <location>
        <begin position="373"/>
        <end position="386"/>
    </location>
</feature>
<feature type="helix" evidence="9">
    <location>
        <begin position="387"/>
        <end position="389"/>
    </location>
</feature>
<feature type="helix" evidence="9">
    <location>
        <begin position="394"/>
        <end position="404"/>
    </location>
</feature>
<feature type="helix" evidence="9">
    <location>
        <begin position="409"/>
        <end position="416"/>
    </location>
</feature>
<feature type="helix" evidence="9">
    <location>
        <begin position="419"/>
        <end position="430"/>
    </location>
</feature>
<feature type="turn" evidence="9">
    <location>
        <begin position="435"/>
        <end position="438"/>
    </location>
</feature>
<feature type="helix" evidence="9">
    <location>
        <begin position="439"/>
        <end position="445"/>
    </location>
</feature>
<feature type="helix" evidence="9">
    <location>
        <begin position="450"/>
        <end position="458"/>
    </location>
</feature>
<feature type="strand" evidence="9">
    <location>
        <begin position="460"/>
        <end position="466"/>
    </location>
</feature>
<feature type="helix" evidence="9">
    <location>
        <begin position="470"/>
        <end position="472"/>
    </location>
</feature>
<feature type="strand" evidence="9">
    <location>
        <begin position="496"/>
        <end position="501"/>
    </location>
</feature>
<feature type="strand" evidence="9">
    <location>
        <begin position="503"/>
        <end position="505"/>
    </location>
</feature>
<feature type="strand" evidence="9">
    <location>
        <begin position="518"/>
        <end position="520"/>
    </location>
</feature>
<feature type="strand" evidence="9">
    <location>
        <begin position="525"/>
        <end position="529"/>
    </location>
</feature>
<feature type="strand" evidence="9">
    <location>
        <begin position="552"/>
        <end position="559"/>
    </location>
</feature>
<feature type="helix" evidence="9">
    <location>
        <begin position="561"/>
        <end position="578"/>
    </location>
</feature>
<feature type="helix" evidence="9">
    <location>
        <begin position="585"/>
        <end position="601"/>
    </location>
</feature>
<feature type="helix" evidence="9">
    <location>
        <begin position="608"/>
        <end position="618"/>
    </location>
</feature>
<feature type="strand" evidence="9">
    <location>
        <begin position="620"/>
        <end position="622"/>
    </location>
</feature>
<feature type="strand" evidence="9">
    <location>
        <begin position="628"/>
        <end position="631"/>
    </location>
</feature>
<feature type="helix" evidence="9">
    <location>
        <begin position="634"/>
        <end position="648"/>
    </location>
</feature>
<feature type="helix" evidence="9">
    <location>
        <begin position="651"/>
        <end position="664"/>
    </location>
</feature>
<feature type="turn" evidence="9">
    <location>
        <begin position="665"/>
        <end position="667"/>
    </location>
</feature>
<feature type="helix" evidence="9">
    <location>
        <begin position="669"/>
        <end position="678"/>
    </location>
</feature>
<feature type="strand" evidence="9">
    <location>
        <begin position="679"/>
        <end position="682"/>
    </location>
</feature>
<feature type="helix" evidence="9">
    <location>
        <begin position="690"/>
        <end position="697"/>
    </location>
</feature>
<feature type="helix" evidence="9">
    <location>
        <begin position="699"/>
        <end position="702"/>
    </location>
</feature>
<feature type="helix" evidence="9">
    <location>
        <begin position="706"/>
        <end position="722"/>
    </location>
</feature>
<feature type="strand" evidence="9">
    <location>
        <begin position="723"/>
        <end position="725"/>
    </location>
</feature>
<feature type="turn" evidence="9">
    <location>
        <begin position="726"/>
        <end position="729"/>
    </location>
</feature>
<feature type="helix" evidence="9">
    <location>
        <begin position="732"/>
        <end position="750"/>
    </location>
</feature>
<feature type="helix" evidence="9">
    <location>
        <begin position="753"/>
        <end position="755"/>
    </location>
</feature>
<feature type="helix" evidence="9">
    <location>
        <begin position="761"/>
        <end position="783"/>
    </location>
</feature>
<feature type="helix" evidence="9">
    <location>
        <begin position="796"/>
        <end position="806"/>
    </location>
</feature>
<feature type="helix" evidence="9">
    <location>
        <begin position="815"/>
        <end position="824"/>
    </location>
</feature>
<feature type="helix" evidence="9">
    <location>
        <begin position="826"/>
        <end position="828"/>
    </location>
</feature>
<feature type="helix" evidence="9">
    <location>
        <begin position="830"/>
        <end position="835"/>
    </location>
</feature>
<feature type="turn" evidence="9">
    <location>
        <begin position="838"/>
        <end position="840"/>
    </location>
</feature>
<feature type="helix" evidence="9">
    <location>
        <begin position="843"/>
        <end position="863"/>
    </location>
</feature>
<feature type="strand" evidence="9">
    <location>
        <begin position="866"/>
        <end position="868"/>
    </location>
</feature>
<feature type="helix" evidence="9">
    <location>
        <begin position="872"/>
        <end position="879"/>
    </location>
</feature>
<feature type="helix" evidence="9">
    <location>
        <begin position="882"/>
        <end position="888"/>
    </location>
</feature>
<feature type="helix" evidence="9">
    <location>
        <begin position="897"/>
        <end position="909"/>
    </location>
</feature>
<feature type="helix" evidence="9">
    <location>
        <begin position="919"/>
        <end position="923"/>
    </location>
</feature>
<feature type="helix" evidence="9">
    <location>
        <begin position="925"/>
        <end position="939"/>
    </location>
</feature>
<feature type="helix" evidence="9">
    <location>
        <begin position="946"/>
        <end position="961"/>
    </location>
</feature>
<feature type="helix" evidence="9">
    <location>
        <begin position="965"/>
        <end position="973"/>
    </location>
</feature>
<feature type="helix" evidence="9">
    <location>
        <begin position="980"/>
        <end position="982"/>
    </location>
</feature>
<feature type="helix" evidence="9">
    <location>
        <begin position="990"/>
        <end position="992"/>
    </location>
</feature>
<feature type="helix" evidence="9">
    <location>
        <begin position="994"/>
        <end position="1002"/>
    </location>
</feature>
<feature type="turn" evidence="9">
    <location>
        <begin position="1005"/>
        <end position="1007"/>
    </location>
</feature>
<feature type="helix" evidence="9">
    <location>
        <begin position="1010"/>
        <end position="1025"/>
    </location>
</feature>
<feature type="helix" evidence="9">
    <location>
        <begin position="1038"/>
        <end position="1049"/>
    </location>
</feature>
<feature type="helix" evidence="9">
    <location>
        <begin position="1051"/>
        <end position="1053"/>
    </location>
</feature>
<feature type="strand" evidence="9">
    <location>
        <begin position="1056"/>
        <end position="1058"/>
    </location>
</feature>
<feature type="helix" evidence="9">
    <location>
        <begin position="1062"/>
        <end position="1088"/>
    </location>
</feature>
<feature type="strand" evidence="9">
    <location>
        <begin position="1090"/>
        <end position="1092"/>
    </location>
</feature>
<feature type="helix" evidence="9">
    <location>
        <begin position="1094"/>
        <end position="1100"/>
    </location>
</feature>
<feature type="helix" evidence="9">
    <location>
        <begin position="1105"/>
        <end position="1109"/>
    </location>
</feature>
<feature type="helix" evidence="9">
    <location>
        <begin position="1110"/>
        <end position="1113"/>
    </location>
</feature>
<feature type="helix" evidence="9">
    <location>
        <begin position="1120"/>
        <end position="1133"/>
    </location>
</feature>
<feature type="helix" evidence="9">
    <location>
        <begin position="1139"/>
        <end position="1142"/>
    </location>
</feature>
<feature type="strand" evidence="9">
    <location>
        <begin position="1156"/>
        <end position="1158"/>
    </location>
</feature>
<feature type="helix" evidence="9">
    <location>
        <begin position="1160"/>
        <end position="1166"/>
    </location>
</feature>
<feature type="turn" evidence="9">
    <location>
        <begin position="1167"/>
        <end position="1169"/>
    </location>
</feature>
<feature type="helix" evidence="9">
    <location>
        <begin position="1171"/>
        <end position="1174"/>
    </location>
</feature>
<feature type="helix" evidence="9">
    <location>
        <begin position="1183"/>
        <end position="1217"/>
    </location>
</feature>
<feature type="helix" evidence="9">
    <location>
        <begin position="1224"/>
        <end position="1238"/>
    </location>
</feature>
<feature type="turn" evidence="9">
    <location>
        <begin position="1241"/>
        <end position="1244"/>
    </location>
</feature>
<feature type="helix" evidence="9">
    <location>
        <begin position="1249"/>
        <end position="1267"/>
    </location>
</feature>
<feature type="helix" evidence="9">
    <location>
        <begin position="1274"/>
        <end position="1288"/>
    </location>
</feature>
<feature type="helix" evidence="9">
    <location>
        <begin position="1299"/>
        <end position="1303"/>
    </location>
</feature>
<feature type="helix" evidence="9">
    <location>
        <begin position="1305"/>
        <end position="1307"/>
    </location>
</feature>
<feature type="helix" evidence="9">
    <location>
        <begin position="1309"/>
        <end position="1318"/>
    </location>
</feature>
<feature type="helix" evidence="9">
    <location>
        <begin position="1329"/>
        <end position="1359"/>
    </location>
</feature>
<feature type="strand" evidence="9">
    <location>
        <begin position="1362"/>
        <end position="1365"/>
    </location>
</feature>
<feature type="turn" evidence="9">
    <location>
        <begin position="1376"/>
        <end position="1379"/>
    </location>
</feature>
<feature type="helix" evidence="9">
    <location>
        <begin position="1380"/>
        <end position="1383"/>
    </location>
</feature>
<feature type="turn" evidence="9">
    <location>
        <begin position="1384"/>
        <end position="1387"/>
    </location>
</feature>
<feature type="helix" evidence="9">
    <location>
        <begin position="1388"/>
        <end position="1396"/>
    </location>
</feature>
<feature type="helix" evidence="9">
    <location>
        <begin position="1402"/>
        <end position="1415"/>
    </location>
</feature>
<feature type="helix" evidence="9">
    <location>
        <begin position="1419"/>
        <end position="1430"/>
    </location>
</feature>
<feature type="helix" evidence="9">
    <location>
        <begin position="1440"/>
        <end position="1451"/>
    </location>
</feature>
<feature type="helix" evidence="9">
    <location>
        <begin position="1454"/>
        <end position="1461"/>
    </location>
</feature>
<feature type="helix" evidence="9">
    <location>
        <begin position="1465"/>
        <end position="1470"/>
    </location>
</feature>
<feature type="helix" evidence="9">
    <location>
        <begin position="1473"/>
        <end position="1479"/>
    </location>
</feature>
<feature type="turn" evidence="9">
    <location>
        <begin position="1485"/>
        <end position="1487"/>
    </location>
</feature>
<feature type="helix" evidence="9">
    <location>
        <begin position="1489"/>
        <end position="1509"/>
    </location>
</feature>
<feature type="helix" evidence="9">
    <location>
        <begin position="1515"/>
        <end position="1524"/>
    </location>
</feature>
<feature type="helix" evidence="9">
    <location>
        <begin position="1526"/>
        <end position="1538"/>
    </location>
</feature>
<feature type="helix" evidence="9">
    <location>
        <begin position="1545"/>
        <end position="1557"/>
    </location>
</feature>
<feature type="helix" evidence="9">
    <location>
        <begin position="1560"/>
        <end position="1563"/>
    </location>
</feature>
<feature type="turn" evidence="9">
    <location>
        <begin position="1587"/>
        <end position="1589"/>
    </location>
</feature>
<feature type="helix" evidence="9">
    <location>
        <begin position="1592"/>
        <end position="1605"/>
    </location>
</feature>
<feature type="helix" evidence="9">
    <location>
        <begin position="1609"/>
        <end position="1615"/>
    </location>
</feature>
<feature type="helix" evidence="9">
    <location>
        <begin position="1621"/>
        <end position="1628"/>
    </location>
</feature>
<feature type="helix" evidence="9">
    <location>
        <begin position="1633"/>
        <end position="1654"/>
    </location>
</feature>